<sequence length="178" mass="18750">TITEETTGFFALGSGPARALSRVEDLFKELNYADQGPNTALVIEGDKAPPAAVIENIAKHCGINPKGLSILYATTWSLAGTVQIAARVLEVAMHKAHALHFALENIIDGTATTPIAPPFPDFVKAMGRTNDAIIYGGRAHLFVKGTDAEAKRLAEGLPSSTCASFGKPFAEIFADVNG</sequence>
<organism>
    <name type="scientific">Hyphomicrobium methylovorum</name>
    <dbReference type="NCBI Taxonomy" id="84"/>
    <lineage>
        <taxon>Bacteria</taxon>
        <taxon>Pseudomonadati</taxon>
        <taxon>Pseudomonadota</taxon>
        <taxon>Alphaproteobacteria</taxon>
        <taxon>Hyphomicrobiales</taxon>
        <taxon>Hyphomicrobiaceae</taxon>
        <taxon>Hyphomicrobium</taxon>
    </lineage>
</organism>
<comment type="function">
    <text evidence="1">Catalyzes the hydrolysis of methenyl-H(4)MPT(+) to 5-formyl-H(4)MPT.</text>
</comment>
<comment type="catalytic activity">
    <reaction>
        <text>5,10-methenyl-5,6,7,8-tetrahydromethanopterin + H2O = N(5)-formyl-5,6,7,8-tetrahydromethanopterin + H(+)</text>
        <dbReference type="Rhea" id="RHEA:19053"/>
        <dbReference type="ChEBI" id="CHEBI:15377"/>
        <dbReference type="ChEBI" id="CHEBI:15378"/>
        <dbReference type="ChEBI" id="CHEBI:58018"/>
        <dbReference type="ChEBI" id="CHEBI:58337"/>
        <dbReference type="EC" id="3.5.4.27"/>
    </reaction>
</comment>
<comment type="pathway">
    <text>One-carbon metabolism; formaldehyde degradation; formate from formaldehyde (H(4)MPT route): step 3/5.</text>
</comment>
<comment type="subcellular location">
    <subcellularLocation>
        <location evidence="1">Cytoplasm</location>
    </subcellularLocation>
</comment>
<comment type="similarity">
    <text evidence="2">Belongs to the MCH family.</text>
</comment>
<proteinExistence type="inferred from homology"/>
<feature type="chain" id="PRO_0000140886" description="Methenyltetrahydromethanopterin cyclohydrolase">
    <location>
        <begin position="1" status="less than"/>
        <end position="178" status="greater than"/>
    </location>
</feature>
<feature type="non-terminal residue">
    <location>
        <position position="1"/>
    </location>
</feature>
<feature type="non-terminal residue">
    <location>
        <position position="178"/>
    </location>
</feature>
<accession>Q9RPW6</accession>
<dbReference type="EC" id="3.5.4.27"/>
<dbReference type="EMBL" id="AF142651">
    <property type="protein sequence ID" value="AAD55901.1"/>
    <property type="molecule type" value="Genomic_DNA"/>
</dbReference>
<dbReference type="SMR" id="Q9RPW6"/>
<dbReference type="UniPathway" id="UPA00562">
    <property type="reaction ID" value="UER00703"/>
</dbReference>
<dbReference type="GO" id="GO:0005737">
    <property type="term" value="C:cytoplasm"/>
    <property type="evidence" value="ECO:0007669"/>
    <property type="project" value="UniProtKB-SubCell"/>
</dbReference>
<dbReference type="GO" id="GO:0018759">
    <property type="term" value="F:methenyltetrahydromethanopterin cyclohydrolase activity"/>
    <property type="evidence" value="ECO:0007669"/>
    <property type="project" value="UniProtKB-EC"/>
</dbReference>
<dbReference type="GO" id="GO:0046294">
    <property type="term" value="P:formaldehyde catabolic process"/>
    <property type="evidence" value="ECO:0007669"/>
    <property type="project" value="UniProtKB-UniPathway"/>
</dbReference>
<dbReference type="GO" id="GO:0006730">
    <property type="term" value="P:one-carbon metabolic process"/>
    <property type="evidence" value="ECO:0007669"/>
    <property type="project" value="UniProtKB-KW"/>
</dbReference>
<dbReference type="Gene3D" id="3.30.1030.10">
    <property type="entry name" value="Methenyltetrahydromethanopterin Cyclohydrolase, Chain A, domain 2"/>
    <property type="match status" value="1"/>
</dbReference>
<dbReference type="InterPro" id="IPR003209">
    <property type="entry name" value="METHMP_CycHdrlase"/>
</dbReference>
<dbReference type="Pfam" id="PF02289">
    <property type="entry name" value="MCH"/>
    <property type="match status" value="1"/>
</dbReference>
<dbReference type="SUPFAM" id="SSF56199">
    <property type="entry name" value="Methenyltetrahydromethanopterin cyclohydrolase"/>
    <property type="match status" value="1"/>
</dbReference>
<gene>
    <name type="primary">mch</name>
</gene>
<protein>
    <recommendedName>
        <fullName>Methenyltetrahydromethanopterin cyclohydrolase</fullName>
        <ecNumber>3.5.4.27</ecNumber>
    </recommendedName>
    <alternativeName>
        <fullName>Methenyl-H4MPT cyclohydrolase</fullName>
    </alternativeName>
</protein>
<reference key="1">
    <citation type="journal article" date="1999" name="J. Bacteriol.">
        <title>Distribution of tetrahydromethanopterin-dependent enzymes in methylotrophic bacteria and phylogeny of methenyl tetrahydromethanopterin cyclohydrolases.</title>
        <authorList>
            <person name="Vorholt J.A."/>
            <person name="Chistoserdova L.V."/>
            <person name="Stolyar S.M."/>
            <person name="Thauer R.K."/>
            <person name="Lidstrom M.E."/>
        </authorList>
    </citation>
    <scope>NUCLEOTIDE SEQUENCE [GENOMIC DNA]</scope>
    <source>
        <strain>GM2</strain>
    </source>
</reference>
<keyword id="KW-0963">Cytoplasm</keyword>
<keyword id="KW-0378">Hydrolase</keyword>
<keyword id="KW-0554">One-carbon metabolism</keyword>
<name>MCH_HYPME</name>
<evidence type="ECO:0000250" key="1"/>
<evidence type="ECO:0000305" key="2"/>